<protein>
    <recommendedName>
        <fullName evidence="1">Translation initiation factor IF-1</fullName>
    </recommendedName>
</protein>
<proteinExistence type="inferred from homology"/>
<accession>A7H0Z3</accession>
<sequence>MAKDDVIEIDGNVVEALPNATFKVELDNKHVILCHIAGKMRMHYIKIMPGDRVKVELTPYSLDKGRITYRYK</sequence>
<reference key="1">
    <citation type="submission" date="2007-07" db="EMBL/GenBank/DDBJ databases">
        <title>Genome sequence of Campylobacter curvus 525.92 isolated from human feces.</title>
        <authorList>
            <person name="Fouts D.E."/>
            <person name="Mongodin E.F."/>
            <person name="Puiu D."/>
            <person name="Sebastian Y."/>
            <person name="Miller W.G."/>
            <person name="Mandrell R.E."/>
            <person name="Lastovica A.J."/>
            <person name="Nelson K.E."/>
        </authorList>
    </citation>
    <scope>NUCLEOTIDE SEQUENCE [LARGE SCALE GENOMIC DNA]</scope>
    <source>
        <strain>525.92</strain>
    </source>
</reference>
<dbReference type="EMBL" id="CP000767">
    <property type="protein sequence ID" value="EAT99614.1"/>
    <property type="molecule type" value="Genomic_DNA"/>
</dbReference>
<dbReference type="RefSeq" id="WP_009649712.1">
    <property type="nucleotide sequence ID" value="NC_009715.2"/>
</dbReference>
<dbReference type="SMR" id="A7H0Z3"/>
<dbReference type="STRING" id="360105.CCV52592_1012"/>
<dbReference type="GeneID" id="93078139"/>
<dbReference type="KEGG" id="ccv:CCV52592_1012"/>
<dbReference type="HOGENOM" id="CLU_151267_1_0_7"/>
<dbReference type="OrthoDB" id="9803250at2"/>
<dbReference type="Proteomes" id="UP000006380">
    <property type="component" value="Chromosome"/>
</dbReference>
<dbReference type="GO" id="GO:0005829">
    <property type="term" value="C:cytosol"/>
    <property type="evidence" value="ECO:0007669"/>
    <property type="project" value="TreeGrafter"/>
</dbReference>
<dbReference type="GO" id="GO:0043022">
    <property type="term" value="F:ribosome binding"/>
    <property type="evidence" value="ECO:0007669"/>
    <property type="project" value="UniProtKB-UniRule"/>
</dbReference>
<dbReference type="GO" id="GO:0019843">
    <property type="term" value="F:rRNA binding"/>
    <property type="evidence" value="ECO:0007669"/>
    <property type="project" value="UniProtKB-UniRule"/>
</dbReference>
<dbReference type="GO" id="GO:0003743">
    <property type="term" value="F:translation initiation factor activity"/>
    <property type="evidence" value="ECO:0007669"/>
    <property type="project" value="UniProtKB-UniRule"/>
</dbReference>
<dbReference type="CDD" id="cd04451">
    <property type="entry name" value="S1_IF1"/>
    <property type="match status" value="1"/>
</dbReference>
<dbReference type="FunFam" id="2.40.50.140:FF:000002">
    <property type="entry name" value="Translation initiation factor IF-1"/>
    <property type="match status" value="1"/>
</dbReference>
<dbReference type="Gene3D" id="2.40.50.140">
    <property type="entry name" value="Nucleic acid-binding proteins"/>
    <property type="match status" value="1"/>
</dbReference>
<dbReference type="HAMAP" id="MF_00075">
    <property type="entry name" value="IF_1"/>
    <property type="match status" value="1"/>
</dbReference>
<dbReference type="InterPro" id="IPR012340">
    <property type="entry name" value="NA-bd_OB-fold"/>
</dbReference>
<dbReference type="InterPro" id="IPR006196">
    <property type="entry name" value="RNA-binding_domain_S1_IF1"/>
</dbReference>
<dbReference type="InterPro" id="IPR004368">
    <property type="entry name" value="TIF_IF1"/>
</dbReference>
<dbReference type="NCBIfam" id="TIGR00008">
    <property type="entry name" value="infA"/>
    <property type="match status" value="1"/>
</dbReference>
<dbReference type="PANTHER" id="PTHR33370">
    <property type="entry name" value="TRANSLATION INITIATION FACTOR IF-1, CHLOROPLASTIC"/>
    <property type="match status" value="1"/>
</dbReference>
<dbReference type="PANTHER" id="PTHR33370:SF1">
    <property type="entry name" value="TRANSLATION INITIATION FACTOR IF-1, CHLOROPLASTIC"/>
    <property type="match status" value="1"/>
</dbReference>
<dbReference type="Pfam" id="PF01176">
    <property type="entry name" value="eIF-1a"/>
    <property type="match status" value="1"/>
</dbReference>
<dbReference type="SUPFAM" id="SSF50249">
    <property type="entry name" value="Nucleic acid-binding proteins"/>
    <property type="match status" value="1"/>
</dbReference>
<dbReference type="PROSITE" id="PS50832">
    <property type="entry name" value="S1_IF1_TYPE"/>
    <property type="match status" value="1"/>
</dbReference>
<name>IF1_CAMC5</name>
<gene>
    <name evidence="1" type="primary">infA</name>
    <name type="ordered locus">Ccur92_18310</name>
    <name type="ORF">CCV52592_1012</name>
</gene>
<comment type="function">
    <text evidence="1">One of the essential components for the initiation of protein synthesis. Stabilizes the binding of IF-2 and IF-3 on the 30S subunit to which N-formylmethionyl-tRNA(fMet) subsequently binds. Helps modulate mRNA selection, yielding the 30S pre-initiation complex (PIC). Upon addition of the 50S ribosomal subunit IF-1, IF-2 and IF-3 are released leaving the mature 70S translation initiation complex.</text>
</comment>
<comment type="subunit">
    <text evidence="1">Component of the 30S ribosomal translation pre-initiation complex which assembles on the 30S ribosome in the order IF-2 and IF-3, IF-1 and N-formylmethionyl-tRNA(fMet); mRNA recruitment can occur at any time during PIC assembly.</text>
</comment>
<comment type="subcellular location">
    <subcellularLocation>
        <location evidence="1">Cytoplasm</location>
    </subcellularLocation>
</comment>
<comment type="similarity">
    <text evidence="1">Belongs to the IF-1 family.</text>
</comment>
<organism>
    <name type="scientific">Campylobacter curvus (strain 525.92)</name>
    <dbReference type="NCBI Taxonomy" id="360105"/>
    <lineage>
        <taxon>Bacteria</taxon>
        <taxon>Pseudomonadati</taxon>
        <taxon>Campylobacterota</taxon>
        <taxon>Epsilonproteobacteria</taxon>
        <taxon>Campylobacterales</taxon>
        <taxon>Campylobacteraceae</taxon>
        <taxon>Campylobacter</taxon>
    </lineage>
</organism>
<keyword id="KW-0963">Cytoplasm</keyword>
<keyword id="KW-0396">Initiation factor</keyword>
<keyword id="KW-0648">Protein biosynthesis</keyword>
<keyword id="KW-1185">Reference proteome</keyword>
<keyword id="KW-0694">RNA-binding</keyword>
<keyword id="KW-0699">rRNA-binding</keyword>
<feature type="chain" id="PRO_0000338791" description="Translation initiation factor IF-1">
    <location>
        <begin position="1"/>
        <end position="72"/>
    </location>
</feature>
<feature type="domain" description="S1-like" evidence="1">
    <location>
        <begin position="1"/>
        <end position="72"/>
    </location>
</feature>
<evidence type="ECO:0000255" key="1">
    <source>
        <dbReference type="HAMAP-Rule" id="MF_00075"/>
    </source>
</evidence>